<organism>
    <name type="scientific">Rattus norvegicus</name>
    <name type="common">Rat</name>
    <dbReference type="NCBI Taxonomy" id="10116"/>
    <lineage>
        <taxon>Eukaryota</taxon>
        <taxon>Metazoa</taxon>
        <taxon>Chordata</taxon>
        <taxon>Craniata</taxon>
        <taxon>Vertebrata</taxon>
        <taxon>Euteleostomi</taxon>
        <taxon>Mammalia</taxon>
        <taxon>Eutheria</taxon>
        <taxon>Euarchontoglires</taxon>
        <taxon>Glires</taxon>
        <taxon>Rodentia</taxon>
        <taxon>Myomorpha</taxon>
        <taxon>Muroidea</taxon>
        <taxon>Muridae</taxon>
        <taxon>Murinae</taxon>
        <taxon>Rattus</taxon>
    </lineage>
</organism>
<reference key="1">
    <citation type="journal article" date="2004" name="Genome Res.">
        <title>The status, quality, and expansion of the NIH full-length cDNA project: the Mammalian Gene Collection (MGC).</title>
        <authorList>
            <consortium name="The MGC Project Team"/>
        </authorList>
    </citation>
    <scope>NUCLEOTIDE SEQUENCE [LARGE SCALE MRNA]</scope>
    <source>
        <tissue>Prostate</tissue>
    </source>
</reference>
<name>S39AD_RAT</name>
<accession>Q2M1K6</accession>
<protein>
    <recommendedName>
        <fullName evidence="1">Zinc transporter ZIP13</fullName>
    </recommendedName>
    <alternativeName>
        <fullName>Solute carrier family 39 member 13</fullName>
    </alternativeName>
    <alternativeName>
        <fullName>Zrt- and Irt-like protein 13</fullName>
        <shortName>ZIP-13</shortName>
    </alternativeName>
</protein>
<evidence type="ECO:0000250" key="1">
    <source>
        <dbReference type="UniProtKB" id="Q8BZH0"/>
    </source>
</evidence>
<evidence type="ECO:0000250" key="2">
    <source>
        <dbReference type="UniProtKB" id="Q96H72"/>
    </source>
</evidence>
<evidence type="ECO:0000255" key="3"/>
<evidence type="ECO:0000305" key="4"/>
<evidence type="ECO:0000312" key="5">
    <source>
        <dbReference type="RGD" id="1304695"/>
    </source>
</evidence>
<proteinExistence type="evidence at transcript level"/>
<feature type="chain" id="PRO_0000312312" description="Zinc transporter ZIP13">
    <location>
        <begin position="1"/>
        <end position="361"/>
    </location>
</feature>
<feature type="topological domain" description="Lumenal" evidence="3">
    <location>
        <begin position="1"/>
        <end position="6"/>
    </location>
</feature>
<feature type="transmembrane region" description="Helical" evidence="3">
    <location>
        <begin position="7"/>
        <end position="27"/>
    </location>
</feature>
<feature type="topological domain" description="Cytoplasmic" evidence="3">
    <location>
        <begin position="28"/>
        <end position="68"/>
    </location>
</feature>
<feature type="transmembrane region" description="Helical" evidence="3">
    <location>
        <begin position="69"/>
        <end position="89"/>
    </location>
</feature>
<feature type="topological domain" description="Lumenal" evidence="3">
    <location>
        <begin position="90"/>
        <end position="108"/>
    </location>
</feature>
<feature type="transmembrane region" description="Helical" evidence="3">
    <location>
        <begin position="109"/>
        <end position="129"/>
    </location>
</feature>
<feature type="topological domain" description="Cytoplasmic" evidence="3">
    <location>
        <begin position="130"/>
        <end position="150"/>
    </location>
</feature>
<feature type="transmembrane region" description="Helical" evidence="3">
    <location>
        <begin position="151"/>
        <end position="171"/>
    </location>
</feature>
<feature type="topological domain" description="Lumenal" evidence="3">
    <location>
        <begin position="172"/>
        <end position="233"/>
    </location>
</feature>
<feature type="transmembrane region" description="Helical" evidence="3">
    <location>
        <begin position="234"/>
        <end position="254"/>
    </location>
</feature>
<feature type="topological domain" description="Cytoplasmic" evidence="3">
    <location>
        <begin position="255"/>
        <end position="276"/>
    </location>
</feature>
<feature type="transmembrane region" description="Helical" evidence="3">
    <location>
        <begin position="277"/>
        <end position="297"/>
    </location>
</feature>
<feature type="topological domain" description="Lumenal" evidence="3">
    <location>
        <begin position="298"/>
        <end position="307"/>
    </location>
</feature>
<feature type="transmembrane region" description="Helical" evidence="3">
    <location>
        <begin position="308"/>
        <end position="328"/>
    </location>
</feature>
<feature type="topological domain" description="Cytoplasmic" evidence="3">
    <location>
        <begin position="329"/>
        <end position="340"/>
    </location>
</feature>
<feature type="transmembrane region" description="Helical" evidence="3">
    <location>
        <begin position="341"/>
        <end position="361"/>
    </location>
</feature>
<feature type="short sequence motif" description="XEXPHE-motif">
    <location>
        <begin position="255"/>
        <end position="260"/>
    </location>
</feature>
<sequence>MPGCPCPGCGMAGQRLLFLTVLALELLERAGGSQPALRSLGAAAACRLDSKESESWGALLSGERLDTWICSLLGSLMVGLSGVFPLLVIPLEMGTMLQSEAGAWRLKQLLSFALGGLLGNVFLHLLPEAWAYTCNISPGVEGQSLQRQQQLGLWVIAGFLTFLALEKMFLNCKEEDPSQAPSKDPTAAALNGGHCLAQPAAEPGLRAVVRNLKVSGYLNLLANTIDNFTHGLAVAASFLVSKKIGLLTTMAILLHEIPHEVGDFAILLRAGFDRWTAAKLQFSTALGGLLGACFAICTQSPKGVEETVVWTLPFTSGGFLYVALVNVLPDLLEEDDPWHLNPPLPTGTPCSRCCCSAPVSW</sequence>
<dbReference type="EMBL" id="BC112321">
    <property type="protein sequence ID" value="AAI12322.1"/>
    <property type="molecule type" value="mRNA"/>
</dbReference>
<dbReference type="RefSeq" id="NP_001034285.1">
    <property type="nucleotide sequence ID" value="NM_001039196.1"/>
</dbReference>
<dbReference type="SMR" id="Q2M1K6"/>
<dbReference type="FunCoup" id="Q2M1K6">
    <property type="interactions" value="1190"/>
</dbReference>
<dbReference type="STRING" id="10116.ENSRNOP00000016191"/>
<dbReference type="PhosphoSitePlus" id="Q2M1K6"/>
<dbReference type="PaxDb" id="10116-ENSRNOP00000016191"/>
<dbReference type="UCSC" id="RGD:1304695">
    <property type="organism name" value="rat"/>
</dbReference>
<dbReference type="AGR" id="RGD:1304695"/>
<dbReference type="RGD" id="1304695">
    <property type="gene designation" value="Slc39a13"/>
</dbReference>
<dbReference type="VEuPathDB" id="HostDB:ENSRNOG00000011981"/>
<dbReference type="eggNOG" id="KOG2694">
    <property type="taxonomic scope" value="Eukaryota"/>
</dbReference>
<dbReference type="HOGENOM" id="CLU_015114_0_2_1"/>
<dbReference type="InParanoid" id="Q2M1K6"/>
<dbReference type="PhylomeDB" id="Q2M1K6"/>
<dbReference type="TreeFam" id="TF318470"/>
<dbReference type="PRO" id="PR:Q2M1K6"/>
<dbReference type="Proteomes" id="UP000002494">
    <property type="component" value="Chromosome 3"/>
</dbReference>
<dbReference type="Bgee" id="ENSRNOG00000011981">
    <property type="expression patterns" value="Expressed in skeletal muscle tissue and 20 other cell types or tissues"/>
</dbReference>
<dbReference type="GO" id="GO:0030659">
    <property type="term" value="C:cytoplasmic vesicle membrane"/>
    <property type="evidence" value="ECO:0000250"/>
    <property type="project" value="UniProtKB"/>
</dbReference>
<dbReference type="GO" id="GO:0005789">
    <property type="term" value="C:endoplasmic reticulum membrane"/>
    <property type="evidence" value="ECO:0000266"/>
    <property type="project" value="RGD"/>
</dbReference>
<dbReference type="GO" id="GO:0005794">
    <property type="term" value="C:Golgi apparatus"/>
    <property type="evidence" value="ECO:0000266"/>
    <property type="project" value="RGD"/>
</dbReference>
<dbReference type="GO" id="GO:0000139">
    <property type="term" value="C:Golgi membrane"/>
    <property type="evidence" value="ECO:0000266"/>
    <property type="project" value="RGD"/>
</dbReference>
<dbReference type="GO" id="GO:0016020">
    <property type="term" value="C:membrane"/>
    <property type="evidence" value="ECO:0000266"/>
    <property type="project" value="RGD"/>
</dbReference>
<dbReference type="GO" id="GO:0048471">
    <property type="term" value="C:perinuclear region of cytoplasm"/>
    <property type="evidence" value="ECO:0000266"/>
    <property type="project" value="RGD"/>
</dbReference>
<dbReference type="GO" id="GO:0042803">
    <property type="term" value="F:protein homodimerization activity"/>
    <property type="evidence" value="ECO:0000266"/>
    <property type="project" value="RGD"/>
</dbReference>
<dbReference type="GO" id="GO:0005385">
    <property type="term" value="F:zinc ion transmembrane transporter activity"/>
    <property type="evidence" value="ECO:0000250"/>
    <property type="project" value="UniProtKB"/>
</dbReference>
<dbReference type="GO" id="GO:0050873">
    <property type="term" value="P:brown fat cell differentiation"/>
    <property type="evidence" value="ECO:0000250"/>
    <property type="project" value="UniProtKB"/>
</dbReference>
<dbReference type="GO" id="GO:0061448">
    <property type="term" value="P:connective tissue development"/>
    <property type="evidence" value="ECO:0000266"/>
    <property type="project" value="RGD"/>
</dbReference>
<dbReference type="GO" id="GO:0006882">
    <property type="term" value="P:intracellular zinc ion homeostasis"/>
    <property type="evidence" value="ECO:0000266"/>
    <property type="project" value="RGD"/>
</dbReference>
<dbReference type="GO" id="GO:0010043">
    <property type="term" value="P:response to zinc ion"/>
    <property type="evidence" value="ECO:0000270"/>
    <property type="project" value="RGD"/>
</dbReference>
<dbReference type="GO" id="GO:0071577">
    <property type="term" value="P:zinc ion transmembrane transport"/>
    <property type="evidence" value="ECO:0000266"/>
    <property type="project" value="RGD"/>
</dbReference>
<dbReference type="GO" id="GO:0006829">
    <property type="term" value="P:zinc ion transport"/>
    <property type="evidence" value="ECO:0000250"/>
    <property type="project" value="UniProtKB"/>
</dbReference>
<dbReference type="InterPro" id="IPR003689">
    <property type="entry name" value="ZIP"/>
</dbReference>
<dbReference type="PANTHER" id="PTHR16950">
    <property type="entry name" value="ZINC TRANSPORTER SLC39A7 HISTIDINE-RICH MEMBRANE PROTEIN KE4"/>
    <property type="match status" value="1"/>
</dbReference>
<dbReference type="PANTHER" id="PTHR16950:SF16">
    <property type="entry name" value="ZINC TRANSPORTER ZIP13"/>
    <property type="match status" value="1"/>
</dbReference>
<dbReference type="Pfam" id="PF02535">
    <property type="entry name" value="Zip"/>
    <property type="match status" value="1"/>
</dbReference>
<comment type="function">
    <text evidence="1">Functions as a zinc transporter transporting Zn(2+) from the Golgi apparatus to the cytosol and thus influences the zinc level at least in areas of the cytosol. May regulate beige adipocyte differentiation.</text>
</comment>
<comment type="catalytic activity">
    <reaction evidence="1">
        <text>Zn(2+)(in) = Zn(2+)(out)</text>
        <dbReference type="Rhea" id="RHEA:29351"/>
        <dbReference type="ChEBI" id="CHEBI:29105"/>
    </reaction>
</comment>
<comment type="subunit">
    <text evidence="2">Homodimer.</text>
</comment>
<comment type="subcellular location">
    <subcellularLocation>
        <location evidence="1">Golgi apparatus membrane</location>
        <topology evidence="2">Multi-pass membrane protein</topology>
    </subcellularLocation>
    <subcellularLocation>
        <location evidence="2">Cytoplasmic vesicle membrane</location>
    </subcellularLocation>
    <subcellularLocation>
        <location evidence="2">Endoplasmic reticulum membrane</location>
    </subcellularLocation>
</comment>
<comment type="similarity">
    <text evidence="4">Belongs to the ZIP transporter (TC 2.A.5) family.</text>
</comment>
<gene>
    <name evidence="5" type="primary">Slc39a13</name>
    <name type="synonym">Zip13</name>
</gene>
<keyword id="KW-0968">Cytoplasmic vesicle</keyword>
<keyword id="KW-0256">Endoplasmic reticulum</keyword>
<keyword id="KW-0333">Golgi apparatus</keyword>
<keyword id="KW-0406">Ion transport</keyword>
<keyword id="KW-0472">Membrane</keyword>
<keyword id="KW-1185">Reference proteome</keyword>
<keyword id="KW-0812">Transmembrane</keyword>
<keyword id="KW-1133">Transmembrane helix</keyword>
<keyword id="KW-0813">Transport</keyword>
<keyword id="KW-0862">Zinc</keyword>
<keyword id="KW-0864">Zinc transport</keyword>